<sequence>MAGARQAVGEARRIVVKVGSSSLTTAAGGLDADRVDALVDVLAKMRGADKEVVLVSSGAIAAGLAPLGLPRRPRDLARQQAAASVGQGLLVARYTASFARYGVRVGQVLLTSDDMSRRAHHRNASRTLDKLLAMGAFPIVNENDTVATDEIRFGDNDRLAALVAHLVRADLLVLLSDVDGVYDGDPSRPGTSRLAEVRDMGDLAGVDIGSAGKAGVGTGGMVTKVEAARIAAAAGIPVVLTSAVHAADALAGGDTGTYFHATGRRSADRLLWLQHASAPQGALVLDDGAVRAVVEGRKSLLPAGIAGVEGDFAAGDPVELRDGTGRAVARGLVNFDAKEMPRLIGRSTRELARELGPAYEREVVHRDDLVILHP</sequence>
<feature type="chain" id="PRO_0000109730" description="Glutamate 5-kinase">
    <location>
        <begin position="1"/>
        <end position="374"/>
    </location>
</feature>
<feature type="domain" description="PUA" evidence="1">
    <location>
        <begin position="280"/>
        <end position="358"/>
    </location>
</feature>
<feature type="binding site" evidence="1">
    <location>
        <position position="17"/>
    </location>
    <ligand>
        <name>ATP</name>
        <dbReference type="ChEBI" id="CHEBI:30616"/>
    </ligand>
</feature>
<feature type="binding site" evidence="1">
    <location>
        <position position="57"/>
    </location>
    <ligand>
        <name>substrate</name>
    </ligand>
</feature>
<feature type="binding site" evidence="1">
    <location>
        <position position="144"/>
    </location>
    <ligand>
        <name>substrate</name>
    </ligand>
</feature>
<feature type="binding site" evidence="1">
    <location>
        <position position="156"/>
    </location>
    <ligand>
        <name>substrate</name>
    </ligand>
</feature>
<feature type="binding site" evidence="1">
    <location>
        <begin position="176"/>
        <end position="177"/>
    </location>
    <ligand>
        <name>ATP</name>
        <dbReference type="ChEBI" id="CHEBI:30616"/>
    </ligand>
</feature>
<feature type="binding site" evidence="1">
    <location>
        <begin position="218"/>
        <end position="224"/>
    </location>
    <ligand>
        <name>ATP</name>
        <dbReference type="ChEBI" id="CHEBI:30616"/>
    </ligand>
</feature>
<name>PROB_STRCO</name>
<dbReference type="EC" id="2.7.2.11" evidence="1"/>
<dbReference type="EMBL" id="AL939113">
    <property type="protein sequence ID" value="CAB66265.1"/>
    <property type="molecule type" value="Genomic_DNA"/>
</dbReference>
<dbReference type="RefSeq" id="NP_626825.1">
    <property type="nucleotide sequence ID" value="NC_003888.3"/>
</dbReference>
<dbReference type="RefSeq" id="WP_011028438.1">
    <property type="nucleotide sequence ID" value="NZ_VNID01000001.1"/>
</dbReference>
<dbReference type="SMR" id="Q9RDJ9"/>
<dbReference type="FunCoup" id="Q9RDJ9">
    <property type="interactions" value="137"/>
</dbReference>
<dbReference type="STRING" id="100226.gene:17760191"/>
<dbReference type="PaxDb" id="100226-SCO2587"/>
<dbReference type="GeneID" id="91386416"/>
<dbReference type="KEGG" id="sco:SCO2587"/>
<dbReference type="PATRIC" id="fig|100226.15.peg.2632"/>
<dbReference type="eggNOG" id="COG0263">
    <property type="taxonomic scope" value="Bacteria"/>
</dbReference>
<dbReference type="HOGENOM" id="CLU_025400_2_0_11"/>
<dbReference type="InParanoid" id="Q9RDJ9"/>
<dbReference type="OrthoDB" id="9804434at2"/>
<dbReference type="PhylomeDB" id="Q9RDJ9"/>
<dbReference type="UniPathway" id="UPA00098">
    <property type="reaction ID" value="UER00359"/>
</dbReference>
<dbReference type="Proteomes" id="UP000001973">
    <property type="component" value="Chromosome"/>
</dbReference>
<dbReference type="GO" id="GO:0005829">
    <property type="term" value="C:cytosol"/>
    <property type="evidence" value="ECO:0000318"/>
    <property type="project" value="GO_Central"/>
</dbReference>
<dbReference type="GO" id="GO:0005524">
    <property type="term" value="F:ATP binding"/>
    <property type="evidence" value="ECO:0007669"/>
    <property type="project" value="UniProtKB-KW"/>
</dbReference>
<dbReference type="GO" id="GO:0004349">
    <property type="term" value="F:glutamate 5-kinase activity"/>
    <property type="evidence" value="ECO:0000318"/>
    <property type="project" value="GO_Central"/>
</dbReference>
<dbReference type="GO" id="GO:0003723">
    <property type="term" value="F:RNA binding"/>
    <property type="evidence" value="ECO:0007669"/>
    <property type="project" value="InterPro"/>
</dbReference>
<dbReference type="GO" id="GO:0055129">
    <property type="term" value="P:L-proline biosynthetic process"/>
    <property type="evidence" value="ECO:0007669"/>
    <property type="project" value="UniProtKB-UniRule"/>
</dbReference>
<dbReference type="GO" id="GO:0006561">
    <property type="term" value="P:proline biosynthetic process"/>
    <property type="evidence" value="ECO:0000318"/>
    <property type="project" value="GO_Central"/>
</dbReference>
<dbReference type="CDD" id="cd04242">
    <property type="entry name" value="AAK_G5K_ProB"/>
    <property type="match status" value="1"/>
</dbReference>
<dbReference type="CDD" id="cd21157">
    <property type="entry name" value="PUA_G5K"/>
    <property type="match status" value="1"/>
</dbReference>
<dbReference type="FunFam" id="3.40.1160.10:FF:000021">
    <property type="entry name" value="Glutamate 5-kinase"/>
    <property type="match status" value="1"/>
</dbReference>
<dbReference type="FunFam" id="3.40.1160.10:FF:000067">
    <property type="entry name" value="Glutamate 5-kinase"/>
    <property type="match status" value="1"/>
</dbReference>
<dbReference type="Gene3D" id="3.40.1160.10">
    <property type="entry name" value="Acetylglutamate kinase-like"/>
    <property type="match status" value="2"/>
</dbReference>
<dbReference type="Gene3D" id="2.30.130.10">
    <property type="entry name" value="PUA domain"/>
    <property type="match status" value="1"/>
</dbReference>
<dbReference type="HAMAP" id="MF_00456">
    <property type="entry name" value="ProB"/>
    <property type="match status" value="1"/>
</dbReference>
<dbReference type="InterPro" id="IPR036393">
    <property type="entry name" value="AceGlu_kinase-like_sf"/>
</dbReference>
<dbReference type="InterPro" id="IPR001048">
    <property type="entry name" value="Asp/Glu/Uridylate_kinase"/>
</dbReference>
<dbReference type="InterPro" id="IPR041739">
    <property type="entry name" value="G5K_ProB"/>
</dbReference>
<dbReference type="InterPro" id="IPR001057">
    <property type="entry name" value="Glu/AcGlu_kinase"/>
</dbReference>
<dbReference type="InterPro" id="IPR011529">
    <property type="entry name" value="Glu_5kinase"/>
</dbReference>
<dbReference type="InterPro" id="IPR005715">
    <property type="entry name" value="Glu_5kinase/COase_Synthase"/>
</dbReference>
<dbReference type="InterPro" id="IPR019797">
    <property type="entry name" value="Glutamate_5-kinase_CS"/>
</dbReference>
<dbReference type="InterPro" id="IPR002478">
    <property type="entry name" value="PUA"/>
</dbReference>
<dbReference type="InterPro" id="IPR015947">
    <property type="entry name" value="PUA-like_sf"/>
</dbReference>
<dbReference type="InterPro" id="IPR036974">
    <property type="entry name" value="PUA_sf"/>
</dbReference>
<dbReference type="NCBIfam" id="TIGR01027">
    <property type="entry name" value="proB"/>
    <property type="match status" value="1"/>
</dbReference>
<dbReference type="PANTHER" id="PTHR43654">
    <property type="entry name" value="GLUTAMATE 5-KINASE"/>
    <property type="match status" value="1"/>
</dbReference>
<dbReference type="PANTHER" id="PTHR43654:SF1">
    <property type="entry name" value="ISOPENTENYL PHOSPHATE KINASE"/>
    <property type="match status" value="1"/>
</dbReference>
<dbReference type="Pfam" id="PF00696">
    <property type="entry name" value="AA_kinase"/>
    <property type="match status" value="1"/>
</dbReference>
<dbReference type="Pfam" id="PF01472">
    <property type="entry name" value="PUA"/>
    <property type="match status" value="1"/>
</dbReference>
<dbReference type="PIRSF" id="PIRSF000729">
    <property type="entry name" value="GK"/>
    <property type="match status" value="1"/>
</dbReference>
<dbReference type="PRINTS" id="PR00474">
    <property type="entry name" value="GLU5KINASE"/>
</dbReference>
<dbReference type="SMART" id="SM00359">
    <property type="entry name" value="PUA"/>
    <property type="match status" value="1"/>
</dbReference>
<dbReference type="SUPFAM" id="SSF53633">
    <property type="entry name" value="Carbamate kinase-like"/>
    <property type="match status" value="1"/>
</dbReference>
<dbReference type="SUPFAM" id="SSF88697">
    <property type="entry name" value="PUA domain-like"/>
    <property type="match status" value="1"/>
</dbReference>
<dbReference type="PROSITE" id="PS00902">
    <property type="entry name" value="GLUTAMATE_5_KINASE"/>
    <property type="match status" value="1"/>
</dbReference>
<dbReference type="PROSITE" id="PS50890">
    <property type="entry name" value="PUA"/>
    <property type="match status" value="1"/>
</dbReference>
<comment type="function">
    <text evidence="1">Catalyzes the transfer of a phosphate group to glutamate to form L-glutamate 5-phosphate.</text>
</comment>
<comment type="catalytic activity">
    <reaction evidence="1">
        <text>L-glutamate + ATP = L-glutamyl 5-phosphate + ADP</text>
        <dbReference type="Rhea" id="RHEA:14877"/>
        <dbReference type="ChEBI" id="CHEBI:29985"/>
        <dbReference type="ChEBI" id="CHEBI:30616"/>
        <dbReference type="ChEBI" id="CHEBI:58274"/>
        <dbReference type="ChEBI" id="CHEBI:456216"/>
        <dbReference type="EC" id="2.7.2.11"/>
    </reaction>
</comment>
<comment type="pathway">
    <text evidence="1">Amino-acid biosynthesis; L-proline biosynthesis; L-glutamate 5-semialdehyde from L-glutamate: step 1/2.</text>
</comment>
<comment type="subcellular location">
    <subcellularLocation>
        <location evidence="1">Cytoplasm</location>
    </subcellularLocation>
</comment>
<comment type="similarity">
    <text evidence="1">Belongs to the glutamate 5-kinase family.</text>
</comment>
<accession>Q9RDJ9</accession>
<evidence type="ECO:0000255" key="1">
    <source>
        <dbReference type="HAMAP-Rule" id="MF_00456"/>
    </source>
</evidence>
<organism>
    <name type="scientific">Streptomyces coelicolor (strain ATCC BAA-471 / A3(2) / M145)</name>
    <dbReference type="NCBI Taxonomy" id="100226"/>
    <lineage>
        <taxon>Bacteria</taxon>
        <taxon>Bacillati</taxon>
        <taxon>Actinomycetota</taxon>
        <taxon>Actinomycetes</taxon>
        <taxon>Kitasatosporales</taxon>
        <taxon>Streptomycetaceae</taxon>
        <taxon>Streptomyces</taxon>
        <taxon>Streptomyces albidoflavus group</taxon>
    </lineage>
</organism>
<gene>
    <name evidence="1" type="primary">proB</name>
    <name type="ordered locus">SCO2587</name>
    <name type="ORF">SCC123.25c</name>
</gene>
<protein>
    <recommendedName>
        <fullName evidence="1">Glutamate 5-kinase</fullName>
        <ecNumber evidence="1">2.7.2.11</ecNumber>
    </recommendedName>
    <alternativeName>
        <fullName evidence="1">Gamma-glutamyl kinase</fullName>
        <shortName evidence="1">GK</shortName>
    </alternativeName>
</protein>
<proteinExistence type="inferred from homology"/>
<keyword id="KW-0028">Amino-acid biosynthesis</keyword>
<keyword id="KW-0067">ATP-binding</keyword>
<keyword id="KW-0963">Cytoplasm</keyword>
<keyword id="KW-0418">Kinase</keyword>
<keyword id="KW-0547">Nucleotide-binding</keyword>
<keyword id="KW-0641">Proline biosynthesis</keyword>
<keyword id="KW-1185">Reference proteome</keyword>
<keyword id="KW-0808">Transferase</keyword>
<reference key="1">
    <citation type="journal article" date="2002" name="Nature">
        <title>Complete genome sequence of the model actinomycete Streptomyces coelicolor A3(2).</title>
        <authorList>
            <person name="Bentley S.D."/>
            <person name="Chater K.F."/>
            <person name="Cerdeno-Tarraga A.-M."/>
            <person name="Challis G.L."/>
            <person name="Thomson N.R."/>
            <person name="James K.D."/>
            <person name="Harris D.E."/>
            <person name="Quail M.A."/>
            <person name="Kieser H."/>
            <person name="Harper D."/>
            <person name="Bateman A."/>
            <person name="Brown S."/>
            <person name="Chandra G."/>
            <person name="Chen C.W."/>
            <person name="Collins M."/>
            <person name="Cronin A."/>
            <person name="Fraser A."/>
            <person name="Goble A."/>
            <person name="Hidalgo J."/>
            <person name="Hornsby T."/>
            <person name="Howarth S."/>
            <person name="Huang C.-H."/>
            <person name="Kieser T."/>
            <person name="Larke L."/>
            <person name="Murphy L.D."/>
            <person name="Oliver K."/>
            <person name="O'Neil S."/>
            <person name="Rabbinowitsch E."/>
            <person name="Rajandream M.A."/>
            <person name="Rutherford K.M."/>
            <person name="Rutter S."/>
            <person name="Seeger K."/>
            <person name="Saunders D."/>
            <person name="Sharp S."/>
            <person name="Squares R."/>
            <person name="Squares S."/>
            <person name="Taylor K."/>
            <person name="Warren T."/>
            <person name="Wietzorrek A."/>
            <person name="Woodward J.R."/>
            <person name="Barrell B.G."/>
            <person name="Parkhill J."/>
            <person name="Hopwood D.A."/>
        </authorList>
    </citation>
    <scope>NUCLEOTIDE SEQUENCE [LARGE SCALE GENOMIC DNA]</scope>
    <source>
        <strain>ATCC BAA-471 / A3(2) / M145</strain>
    </source>
</reference>